<protein>
    <recommendedName>
        <fullName evidence="5">Ammonia monooxygenase gamma subunit</fullName>
        <shortName evidence="5">AMO</shortName>
    </recommendedName>
    <alternativeName>
        <fullName evidence="5">Cytochrome c1</fullName>
    </alternativeName>
    <alternativeName>
        <fullName evidence="5">Heterotrimeric Cu-heme enzyme</fullName>
    </alternativeName>
</protein>
<proteinExistence type="evidence at protein level"/>
<dbReference type="EMBL" id="AL954747">
    <property type="protein sequence ID" value="CAD84722.1"/>
    <property type="molecule type" value="Genomic_DNA"/>
</dbReference>
<dbReference type="RefSeq" id="WP_011111423.1">
    <property type="nucleotide sequence ID" value="NC_004757.1"/>
</dbReference>
<dbReference type="SMR" id="Q82W83"/>
<dbReference type="STRING" id="228410.NE0811"/>
<dbReference type="DNASU" id="1081750"/>
<dbReference type="GeneID" id="87104001"/>
<dbReference type="KEGG" id="neu:NE0811"/>
<dbReference type="eggNOG" id="COG2857">
    <property type="taxonomic scope" value="Bacteria"/>
</dbReference>
<dbReference type="HOGENOM" id="CLU_078597_0_0_4"/>
<dbReference type="OrthoDB" id="9798864at2"/>
<dbReference type="PhylomeDB" id="Q82W83"/>
<dbReference type="Proteomes" id="UP000001416">
    <property type="component" value="Chromosome"/>
</dbReference>
<dbReference type="GO" id="GO:0005737">
    <property type="term" value="C:cytoplasm"/>
    <property type="evidence" value="ECO:0007669"/>
    <property type="project" value="UniProtKB-SubCell"/>
</dbReference>
<dbReference type="GO" id="GO:0005886">
    <property type="term" value="C:plasma membrane"/>
    <property type="evidence" value="ECO:0007669"/>
    <property type="project" value="UniProtKB-SubCell"/>
</dbReference>
<dbReference type="GO" id="GO:0009055">
    <property type="term" value="F:electron transfer activity"/>
    <property type="evidence" value="ECO:0007669"/>
    <property type="project" value="InterPro"/>
</dbReference>
<dbReference type="GO" id="GO:0020037">
    <property type="term" value="F:heme binding"/>
    <property type="evidence" value="ECO:0007669"/>
    <property type="project" value="InterPro"/>
</dbReference>
<dbReference type="GO" id="GO:0046872">
    <property type="term" value="F:metal ion binding"/>
    <property type="evidence" value="ECO:0007669"/>
    <property type="project" value="UniProtKB-KW"/>
</dbReference>
<dbReference type="GO" id="GO:0004497">
    <property type="term" value="F:monooxygenase activity"/>
    <property type="evidence" value="ECO:0007669"/>
    <property type="project" value="UniProtKB-KW"/>
</dbReference>
<dbReference type="Gene3D" id="1.10.760.10">
    <property type="entry name" value="Cytochrome c-like domain"/>
    <property type="match status" value="1"/>
</dbReference>
<dbReference type="InterPro" id="IPR009056">
    <property type="entry name" value="Cyt_c-like_dom"/>
</dbReference>
<dbReference type="InterPro" id="IPR036909">
    <property type="entry name" value="Cyt_c-like_dom_sf"/>
</dbReference>
<dbReference type="InterPro" id="IPR002326">
    <property type="entry name" value="Cyt_c1"/>
</dbReference>
<dbReference type="PANTHER" id="PTHR10266">
    <property type="entry name" value="CYTOCHROME C1"/>
    <property type="match status" value="1"/>
</dbReference>
<dbReference type="PANTHER" id="PTHR10266:SF3">
    <property type="entry name" value="CYTOCHROME C1, HEME PROTEIN, MITOCHONDRIAL"/>
    <property type="match status" value="1"/>
</dbReference>
<dbReference type="Pfam" id="PF02167">
    <property type="entry name" value="Cytochrom_C1"/>
    <property type="match status" value="1"/>
</dbReference>
<dbReference type="PRINTS" id="PR00603">
    <property type="entry name" value="CYTOCHROMEC1"/>
</dbReference>
<dbReference type="SUPFAM" id="SSF46626">
    <property type="entry name" value="Cytochrome c"/>
    <property type="match status" value="1"/>
</dbReference>
<dbReference type="PROSITE" id="PS51007">
    <property type="entry name" value="CYTC"/>
    <property type="match status" value="1"/>
</dbReference>
<evidence type="ECO:0000255" key="1"/>
<evidence type="ECO:0000255" key="2">
    <source>
        <dbReference type="PROSITE-ProRule" id="PRU00433"/>
    </source>
</evidence>
<evidence type="ECO:0000269" key="3">
    <source>
    </source>
</evidence>
<evidence type="ECO:0000269" key="4">
    <source>
    </source>
</evidence>
<evidence type="ECO:0000303" key="5">
    <source>
    </source>
</evidence>
<evidence type="ECO:0000305" key="6"/>
<evidence type="ECO:0000305" key="7">
    <source>
    </source>
</evidence>
<evidence type="ECO:0000312" key="8">
    <source>
        <dbReference type="EMBL" id="CAD84722.1"/>
    </source>
</evidence>
<evidence type="ECO:0000312" key="9">
    <source>
        <dbReference type="Proteomes" id="UP000001416"/>
    </source>
</evidence>
<organism>
    <name type="scientific">Nitrosomonas europaea (strain ATCC 19718 / CIP 103999 / KCTC 2705 / NBRC 14298)</name>
    <dbReference type="NCBI Taxonomy" id="228410"/>
    <lineage>
        <taxon>Bacteria</taxon>
        <taxon>Pseudomonadati</taxon>
        <taxon>Pseudomonadota</taxon>
        <taxon>Betaproteobacteria</taxon>
        <taxon>Nitrosomonadales</taxon>
        <taxon>Nitrosomonadaceae</taxon>
        <taxon>Nitrosomonas</taxon>
    </lineage>
</organism>
<accession>Q82W83</accession>
<gene>
    <name evidence="8" type="primary">petC</name>
    <name evidence="8" type="ordered locus">NE0811</name>
</gene>
<comment type="function">
    <text evidence="3">Part of the ammonia monooxygenase complex, which catalyzes the oxidation of ammonia to hydroxylamine, the first reaction in the process of ammonia oxidation to nitrite.</text>
</comment>
<comment type="cofactor">
    <cofactor evidence="3 4">
        <name>heme c</name>
        <dbReference type="ChEBI" id="CHEBI:61717"/>
    </cofactor>
    <text evidence="3 4">Binds 1 heme c group covalently per subunit.</text>
</comment>
<comment type="subunit">
    <text evidence="3">The soluble ammonia monooxygenase is a nonamer composed of three alpha subunits (AmoA), three beta subunits (AmoB) and three gamma subunits (Cytochrome c1 PetC).</text>
</comment>
<comment type="subcellular location">
    <subcellularLocation>
        <location evidence="3">Cell membrane</location>
        <topology evidence="1">Single-pass membrane protein</topology>
    </subcellularLocation>
    <subcellularLocation>
        <location evidence="3">Cytoplasm</location>
    </subcellularLocation>
    <text evidence="3">Ammonia monooxygenase is active and distributed approximately equally in both subcellular fractions.</text>
</comment>
<comment type="similarity">
    <text evidence="6">Belongs to the cytochrome c family.</text>
</comment>
<comment type="caution">
    <text evidence="7">Substoichiometric amounts of non-heme iron (about 1 iron atom per ammonia monooxygenase complex) have been found, however it does not seem to function as a cofactor.</text>
</comment>
<feature type="signal peptide" evidence="1">
    <location>
        <begin position="1"/>
        <end position="20"/>
    </location>
</feature>
<feature type="chain" id="PRO_5004297614" description="Ammonia monooxygenase gamma subunit" evidence="1">
    <location>
        <begin position="21"/>
        <end position="234"/>
    </location>
</feature>
<feature type="transmembrane region" description="Helical" evidence="1">
    <location>
        <begin position="206"/>
        <end position="226"/>
    </location>
</feature>
<feature type="domain" description="Cytochrome c" evidence="2">
    <location>
        <begin position="38"/>
        <end position="193"/>
    </location>
</feature>
<feature type="binding site" description="covalent" evidence="2">
    <location>
        <position position="51"/>
    </location>
    <ligand>
        <name>heme c</name>
        <dbReference type="ChEBI" id="CHEBI:61717"/>
    </ligand>
</feature>
<feature type="binding site" description="covalent" evidence="2">
    <location>
        <position position="54"/>
    </location>
    <ligand>
        <name>heme c</name>
        <dbReference type="ChEBI" id="CHEBI:61717"/>
    </ligand>
</feature>
<feature type="binding site" description="axial binding residue" evidence="2">
    <location>
        <position position="55"/>
    </location>
    <ligand>
        <name>heme c</name>
        <dbReference type="ChEBI" id="CHEBI:61717"/>
    </ligand>
    <ligandPart>
        <name>Fe</name>
        <dbReference type="ChEBI" id="CHEBI:18248"/>
    </ligandPart>
</feature>
<sequence length="234" mass="26870">MRMIKFLLLAILLAPFVAHSSGQEVKLDKAPIDRADKESLQRGAKGFVEYCLTCHGANFMRFNRHHDIGMSEDDIRADLIHTGQKTGDLMEAAMRKKEAEGWFGVVPPDLSVIARARGADWLYTYLRTFYQDTSTYSGWNNLIFDKVAMPHVLHHLQGWQVLEPGTGNLVQTKPGTMTKEEYDRFVADLVNYMVYLGEPHAPYRRELGITVLLFLFGMLGLTYLLKKEYWRDIH</sequence>
<reference key="1">
    <citation type="journal article" date="2003" name="J. Bacteriol.">
        <title>Complete genome sequence of the ammonia-oxidizing bacterium and obligate chemolithoautotroph Nitrosomonas europaea.</title>
        <authorList>
            <person name="Chain P."/>
            <person name="Lamerdin J.E."/>
            <person name="Larimer F.W."/>
            <person name="Regala W."/>
            <person name="Lao V."/>
            <person name="Land M.L."/>
            <person name="Hauser L."/>
            <person name="Hooper A.B."/>
            <person name="Klotz M.G."/>
            <person name="Norton J."/>
            <person name="Sayavedra-Soto L.A."/>
            <person name="Arciero D.M."/>
            <person name="Hommes N.G."/>
            <person name="Whittaker M.M."/>
            <person name="Arp D.J."/>
        </authorList>
    </citation>
    <scope>NUCLEOTIDE SEQUENCE [LARGE SCALE GENOMIC DNA]</scope>
    <source>
        <strain evidence="9">ATCC 19718 / CIP 103999 / KCTC 2705 / NBRC 14298</strain>
    </source>
</reference>
<reference key="2">
    <citation type="journal article" date="2009" name="Biol. Chem.">
        <title>A soluble form of ammonia monooxygenase in Nitrosomonas europaea.</title>
        <authorList>
            <person name="Gilch S."/>
            <person name="Meyer O."/>
            <person name="Schmidt I."/>
        </authorList>
    </citation>
    <scope>FUNCTION</scope>
    <scope>COFACTOR</scope>
    <scope>SUBCELLULAR LOCATION</scope>
    <scope>SUBUNIT</scope>
    <scope>IDENTIFICATION BY MASS SPECTROMETRY</scope>
    <source>
        <strain>ATCC 19718 / CIP 103999 / KCTC 2705 / NBRC 14298</strain>
    </source>
</reference>
<reference key="3">
    <citation type="journal article" date="2010" name="BioMetals">
        <title>Electron paramagnetic studies of the copper and iron containing soluble ammonia monooxygenase from Nitrosomonas europaea.</title>
        <authorList>
            <person name="Gilch S."/>
            <person name="Meyer O."/>
            <person name="Schmidt I."/>
        </authorList>
    </citation>
    <scope>COFACTOR</scope>
    <source>
        <strain>ATCC 19718 / CIP 103999 / KCTC 2705 / NBRC 14298</strain>
    </source>
</reference>
<name>PETC_NITEU</name>
<keyword id="KW-1003">Cell membrane</keyword>
<keyword id="KW-0963">Cytoplasm</keyword>
<keyword id="KW-0349">Heme</keyword>
<keyword id="KW-0408">Iron</keyword>
<keyword id="KW-0472">Membrane</keyword>
<keyword id="KW-0479">Metal-binding</keyword>
<keyword id="KW-0503">Monooxygenase</keyword>
<keyword id="KW-0560">Oxidoreductase</keyword>
<keyword id="KW-1185">Reference proteome</keyword>
<keyword id="KW-0732">Signal</keyword>
<keyword id="KW-0812">Transmembrane</keyword>
<keyword id="KW-1133">Transmembrane helix</keyword>